<gene>
    <name evidence="1" type="primary">pth</name>
    <name type="ordered locus">Teth39_0167</name>
</gene>
<reference key="1">
    <citation type="submission" date="2008-01" db="EMBL/GenBank/DDBJ databases">
        <title>Complete sequence of Thermoanaerobacter pseudethanolicus 39E.</title>
        <authorList>
            <person name="Copeland A."/>
            <person name="Lucas S."/>
            <person name="Lapidus A."/>
            <person name="Barry K."/>
            <person name="Glavina del Rio T."/>
            <person name="Dalin E."/>
            <person name="Tice H."/>
            <person name="Pitluck S."/>
            <person name="Bruce D."/>
            <person name="Goodwin L."/>
            <person name="Saunders E."/>
            <person name="Brettin T."/>
            <person name="Detter J.C."/>
            <person name="Han C."/>
            <person name="Schmutz J."/>
            <person name="Larimer F."/>
            <person name="Land M."/>
            <person name="Hauser L."/>
            <person name="Kyrpides N."/>
            <person name="Lykidis A."/>
            <person name="Hemme C."/>
            <person name="Fields M.W."/>
            <person name="He Z."/>
            <person name="Zhou J."/>
            <person name="Richardson P."/>
        </authorList>
    </citation>
    <scope>NUCLEOTIDE SEQUENCE [LARGE SCALE GENOMIC DNA]</scope>
    <source>
        <strain>ATCC 33223 / DSM 2355 / 39E</strain>
    </source>
</reference>
<feature type="chain" id="PRO_1000092995" description="Peptidyl-tRNA hydrolase">
    <location>
        <begin position="1"/>
        <end position="184"/>
    </location>
</feature>
<feature type="active site" description="Proton acceptor" evidence="1">
    <location>
        <position position="19"/>
    </location>
</feature>
<feature type="binding site" evidence="1">
    <location>
        <position position="14"/>
    </location>
    <ligand>
        <name>tRNA</name>
        <dbReference type="ChEBI" id="CHEBI:17843"/>
    </ligand>
</feature>
<feature type="binding site" evidence="1">
    <location>
        <position position="64"/>
    </location>
    <ligand>
        <name>tRNA</name>
        <dbReference type="ChEBI" id="CHEBI:17843"/>
    </ligand>
</feature>
<feature type="binding site" evidence="1">
    <location>
        <position position="66"/>
    </location>
    <ligand>
        <name>tRNA</name>
        <dbReference type="ChEBI" id="CHEBI:17843"/>
    </ligand>
</feature>
<feature type="binding site" evidence="1">
    <location>
        <position position="112"/>
    </location>
    <ligand>
        <name>tRNA</name>
        <dbReference type="ChEBI" id="CHEBI:17843"/>
    </ligand>
</feature>
<feature type="site" description="Discriminates between blocked and unblocked aminoacyl-tRNA" evidence="1">
    <location>
        <position position="9"/>
    </location>
</feature>
<feature type="site" description="Stabilizes the basic form of H active site to accept a proton" evidence="1">
    <location>
        <position position="91"/>
    </location>
</feature>
<evidence type="ECO:0000255" key="1">
    <source>
        <dbReference type="HAMAP-Rule" id="MF_00083"/>
    </source>
</evidence>
<name>PTH_THEP3</name>
<proteinExistence type="inferred from homology"/>
<protein>
    <recommendedName>
        <fullName evidence="1">Peptidyl-tRNA hydrolase</fullName>
        <shortName evidence="1">Pth</shortName>
        <ecNumber evidence="1">3.1.1.29</ecNumber>
    </recommendedName>
</protein>
<keyword id="KW-0963">Cytoplasm</keyword>
<keyword id="KW-0378">Hydrolase</keyword>
<keyword id="KW-1185">Reference proteome</keyword>
<keyword id="KW-0694">RNA-binding</keyword>
<keyword id="KW-0820">tRNA-binding</keyword>
<comment type="function">
    <text evidence="1">Hydrolyzes ribosome-free peptidyl-tRNAs (with 1 or more amino acids incorporated), which drop off the ribosome during protein synthesis, or as a result of ribosome stalling.</text>
</comment>
<comment type="function">
    <text evidence="1">Catalyzes the release of premature peptidyl moieties from peptidyl-tRNA molecules trapped in stalled 50S ribosomal subunits, and thus maintains levels of free tRNAs and 50S ribosomes.</text>
</comment>
<comment type="catalytic activity">
    <reaction evidence="1">
        <text>an N-acyl-L-alpha-aminoacyl-tRNA + H2O = an N-acyl-L-amino acid + a tRNA + H(+)</text>
        <dbReference type="Rhea" id="RHEA:54448"/>
        <dbReference type="Rhea" id="RHEA-COMP:10123"/>
        <dbReference type="Rhea" id="RHEA-COMP:13883"/>
        <dbReference type="ChEBI" id="CHEBI:15377"/>
        <dbReference type="ChEBI" id="CHEBI:15378"/>
        <dbReference type="ChEBI" id="CHEBI:59874"/>
        <dbReference type="ChEBI" id="CHEBI:78442"/>
        <dbReference type="ChEBI" id="CHEBI:138191"/>
        <dbReference type="EC" id="3.1.1.29"/>
    </reaction>
</comment>
<comment type="subunit">
    <text evidence="1">Monomer.</text>
</comment>
<comment type="subcellular location">
    <subcellularLocation>
        <location evidence="1">Cytoplasm</location>
    </subcellularLocation>
</comment>
<comment type="similarity">
    <text evidence="1">Belongs to the PTH family.</text>
</comment>
<sequence length="184" mass="20368">MYVIAGLGNPGREYEGTRHNVGFMVIDELAKKLGMNVTKLKFKSLVGEGNFKGEKIILLKPQTFVNSSGEALYDAVNFYKIPLENVIVIYDDKDLDVGKIRIRKKGSSGGHNGMNSIIYLLNSEEFPRVRIGIGKPQKDLVSHVLGKFEESEKKLIDEAVIKAADAVIDIIENGIEHAMSKFNG</sequence>
<accession>B0KBG1</accession>
<dbReference type="EC" id="3.1.1.29" evidence="1"/>
<dbReference type="EMBL" id="CP000924">
    <property type="protein sequence ID" value="ABY93840.1"/>
    <property type="molecule type" value="Genomic_DNA"/>
</dbReference>
<dbReference type="RefSeq" id="WP_012268905.1">
    <property type="nucleotide sequence ID" value="NC_010321.1"/>
</dbReference>
<dbReference type="SMR" id="B0KBG1"/>
<dbReference type="STRING" id="340099.Teth39_0167"/>
<dbReference type="KEGG" id="tpd:Teth39_0167"/>
<dbReference type="eggNOG" id="COG0193">
    <property type="taxonomic scope" value="Bacteria"/>
</dbReference>
<dbReference type="HOGENOM" id="CLU_062456_4_1_9"/>
<dbReference type="Proteomes" id="UP000002156">
    <property type="component" value="Chromosome"/>
</dbReference>
<dbReference type="GO" id="GO:0005737">
    <property type="term" value="C:cytoplasm"/>
    <property type="evidence" value="ECO:0007669"/>
    <property type="project" value="UniProtKB-SubCell"/>
</dbReference>
<dbReference type="GO" id="GO:0004045">
    <property type="term" value="F:peptidyl-tRNA hydrolase activity"/>
    <property type="evidence" value="ECO:0007669"/>
    <property type="project" value="UniProtKB-UniRule"/>
</dbReference>
<dbReference type="GO" id="GO:0000049">
    <property type="term" value="F:tRNA binding"/>
    <property type="evidence" value="ECO:0007669"/>
    <property type="project" value="UniProtKB-UniRule"/>
</dbReference>
<dbReference type="GO" id="GO:0006515">
    <property type="term" value="P:protein quality control for misfolded or incompletely synthesized proteins"/>
    <property type="evidence" value="ECO:0007669"/>
    <property type="project" value="UniProtKB-UniRule"/>
</dbReference>
<dbReference type="GO" id="GO:0072344">
    <property type="term" value="P:rescue of stalled ribosome"/>
    <property type="evidence" value="ECO:0007669"/>
    <property type="project" value="UniProtKB-UniRule"/>
</dbReference>
<dbReference type="CDD" id="cd00462">
    <property type="entry name" value="PTH"/>
    <property type="match status" value="1"/>
</dbReference>
<dbReference type="FunFam" id="3.40.50.1470:FF:000001">
    <property type="entry name" value="Peptidyl-tRNA hydrolase"/>
    <property type="match status" value="1"/>
</dbReference>
<dbReference type="Gene3D" id="3.40.50.1470">
    <property type="entry name" value="Peptidyl-tRNA hydrolase"/>
    <property type="match status" value="1"/>
</dbReference>
<dbReference type="HAMAP" id="MF_00083">
    <property type="entry name" value="Pept_tRNA_hydro_bact"/>
    <property type="match status" value="1"/>
</dbReference>
<dbReference type="InterPro" id="IPR001328">
    <property type="entry name" value="Pept_tRNA_hydro"/>
</dbReference>
<dbReference type="InterPro" id="IPR018171">
    <property type="entry name" value="Pept_tRNA_hydro_CS"/>
</dbReference>
<dbReference type="InterPro" id="IPR036416">
    <property type="entry name" value="Pept_tRNA_hydro_sf"/>
</dbReference>
<dbReference type="NCBIfam" id="TIGR00447">
    <property type="entry name" value="pth"/>
    <property type="match status" value="1"/>
</dbReference>
<dbReference type="PANTHER" id="PTHR17224">
    <property type="entry name" value="PEPTIDYL-TRNA HYDROLASE"/>
    <property type="match status" value="1"/>
</dbReference>
<dbReference type="PANTHER" id="PTHR17224:SF1">
    <property type="entry name" value="PEPTIDYL-TRNA HYDROLASE"/>
    <property type="match status" value="1"/>
</dbReference>
<dbReference type="Pfam" id="PF01195">
    <property type="entry name" value="Pept_tRNA_hydro"/>
    <property type="match status" value="1"/>
</dbReference>
<dbReference type="SUPFAM" id="SSF53178">
    <property type="entry name" value="Peptidyl-tRNA hydrolase-like"/>
    <property type="match status" value="1"/>
</dbReference>
<dbReference type="PROSITE" id="PS01195">
    <property type="entry name" value="PEPT_TRNA_HYDROL_1"/>
    <property type="match status" value="1"/>
</dbReference>
<organism>
    <name type="scientific">Thermoanaerobacter pseudethanolicus (strain ATCC 33223 / 39E)</name>
    <name type="common">Clostridium thermohydrosulfuricum</name>
    <dbReference type="NCBI Taxonomy" id="340099"/>
    <lineage>
        <taxon>Bacteria</taxon>
        <taxon>Bacillati</taxon>
        <taxon>Bacillota</taxon>
        <taxon>Clostridia</taxon>
        <taxon>Thermoanaerobacterales</taxon>
        <taxon>Thermoanaerobacteraceae</taxon>
        <taxon>Thermoanaerobacter</taxon>
    </lineage>
</organism>